<accession>P60761</accession>
<accession>B2RRN7</accession>
<accession>Q3TYH4</accession>
<evidence type="ECO:0000250" key="1"/>
<evidence type="ECO:0000250" key="2">
    <source>
        <dbReference type="UniProtKB" id="P35722"/>
    </source>
</evidence>
<evidence type="ECO:0000255" key="3">
    <source>
        <dbReference type="PROSITE-ProRule" id="PRU00116"/>
    </source>
</evidence>
<evidence type="ECO:0000256" key="4">
    <source>
        <dbReference type="SAM" id="MobiDB-lite"/>
    </source>
</evidence>
<evidence type="ECO:0000269" key="5">
    <source>
    </source>
</evidence>
<evidence type="ECO:0000269" key="6">
    <source>
    </source>
</evidence>
<evidence type="ECO:0000305" key="7"/>
<evidence type="ECO:0007744" key="8">
    <source>
    </source>
</evidence>
<evidence type="ECO:0007829" key="9">
    <source>
        <dbReference type="PDB" id="4E50"/>
    </source>
</evidence>
<keyword id="KW-0002">3D-structure</keyword>
<keyword id="KW-0007">Acetylation</keyword>
<keyword id="KW-0112">Calmodulin-binding</keyword>
<keyword id="KW-0966">Cell projection</keyword>
<keyword id="KW-0164">Citrullination</keyword>
<keyword id="KW-0963">Cytoplasm</keyword>
<keyword id="KW-1015">Disulfide bond</keyword>
<keyword id="KW-0488">Methylation</keyword>
<keyword id="KW-0597">Phosphoprotein</keyword>
<keyword id="KW-1185">Reference proteome</keyword>
<keyword id="KW-0770">Synapse</keyword>
<comment type="function">
    <text evidence="5">Regulates the affinity of calmodulin for calcium. Involved in synaptic plasticity and spatial learning.</text>
</comment>
<comment type="subunit">
    <text evidence="6">Interacts with apo-calmodulin; this interaction decreases the affinity of calmodulin for calcium ions.</text>
</comment>
<comment type="subcellular location">
    <subcellularLocation>
        <location>Cytoplasm</location>
    </subcellularLocation>
    <subcellularLocation>
        <location>Synapse</location>
    </subcellularLocation>
    <subcellularLocation>
        <location>Cell projection</location>
        <location>Dendritic spine</location>
    </subcellularLocation>
    <text evidence="1">Restricted to dendritic spines of a subset of neurons.</text>
</comment>
<comment type="domain">
    <text>Neurogranin is intrinsically unstructured; however, upon binding with CaM, The IQ domain adopts a helical conformation.</text>
</comment>
<comment type="PTM">
    <text evidence="1">Disulfide bond formation is redox-sensitive. The cysteine residues are readily oxidized by several nitric acid (NO) donors and other oxidants to form intramolecular disulfide. Cys-51 can form a disulfide with any other of the cysteine residues with an order of reactivity Cys-9 &gt; Cys-4 &gt; Cys-3 (By similarity).</text>
</comment>
<comment type="PTM">
    <text evidence="6">Phosphorylated at Ser-36 by PHK and PKC, phosphorylation prevents interaction with Calmodulin and interrupts several learning- and memory-associated functions.</text>
</comment>
<comment type="similarity">
    <text evidence="7">Belongs to the neurogranin family.</text>
</comment>
<organism>
    <name type="scientific">Mus musculus</name>
    <name type="common">Mouse</name>
    <dbReference type="NCBI Taxonomy" id="10090"/>
    <lineage>
        <taxon>Eukaryota</taxon>
        <taxon>Metazoa</taxon>
        <taxon>Chordata</taxon>
        <taxon>Craniata</taxon>
        <taxon>Vertebrata</taxon>
        <taxon>Euteleostomi</taxon>
        <taxon>Mammalia</taxon>
        <taxon>Eutheria</taxon>
        <taxon>Euarchontoglires</taxon>
        <taxon>Glires</taxon>
        <taxon>Rodentia</taxon>
        <taxon>Myomorpha</taxon>
        <taxon>Muroidea</taxon>
        <taxon>Muridae</taxon>
        <taxon>Murinae</taxon>
        <taxon>Mus</taxon>
        <taxon>Mus</taxon>
    </lineage>
</organism>
<protein>
    <recommendedName>
        <fullName>Neurogranin</fullName>
        <shortName>Ng</shortName>
    </recommendedName>
    <alternativeName>
        <fullName>RC3</fullName>
    </alternativeName>
    <component>
        <recommendedName>
            <fullName>NEUG(55-78)</fullName>
        </recommendedName>
    </component>
</protein>
<sequence length="78" mass="7496">MDCCTESACSKPDDDILDIPLDDPGANAAAAKIQASFRGHMARKKIKSGECGRKGPGPGGPGGAGGARGGAGGGPSGD</sequence>
<feature type="chain" id="PRO_0000159592" description="Neurogranin">
    <location>
        <begin position="1"/>
        <end position="78"/>
    </location>
</feature>
<feature type="peptide" id="PRO_0000377702" description="NEUG(55-78)" evidence="1">
    <location>
        <begin position="55"/>
        <end position="78"/>
    </location>
</feature>
<feature type="domain" description="IQ" evidence="3">
    <location>
        <begin position="26"/>
        <end position="47"/>
    </location>
</feature>
<feature type="domain" description="Collagen-like">
    <location>
        <begin position="48"/>
        <end position="78"/>
    </location>
</feature>
<feature type="region of interest" description="Disordered" evidence="4">
    <location>
        <begin position="39"/>
        <end position="78"/>
    </location>
</feature>
<feature type="compositionally biased region" description="Gly residues" evidence="4">
    <location>
        <begin position="54"/>
        <end position="78"/>
    </location>
</feature>
<feature type="site" description="Crucial for interaction with calmodulin">
    <location>
        <position position="38"/>
    </location>
</feature>
<feature type="modified residue" description="N-acetylmethionine" evidence="2">
    <location>
        <position position="1"/>
    </location>
</feature>
<feature type="modified residue" description="Phosphoserine; by PHK and PKC" evidence="6">
    <location>
        <position position="36"/>
    </location>
</feature>
<feature type="modified residue" description="Citrulline; partial" evidence="1">
    <location>
        <position position="68"/>
    </location>
</feature>
<feature type="modified residue" description="Omega-N-methylarginine" evidence="8">
    <location>
        <position position="68"/>
    </location>
</feature>
<feature type="disulfide bond" description="Or C-51 with C-4 or C-9">
    <location>
        <begin position="3"/>
        <end position="51"/>
    </location>
</feature>
<feature type="mutagenesis site" description="Abolishes calmodulin binding, unable to potentiate synaptic transmission." evidence="6">
    <original>R</original>
    <variation>A</variation>
    <location>
        <position position="38"/>
    </location>
</feature>
<feature type="helix" evidence="9">
    <location>
        <begin position="28"/>
        <end position="45"/>
    </location>
</feature>
<gene>
    <name type="primary">Nrgn</name>
</gene>
<name>NEUG_MOUSE</name>
<reference key="1">
    <citation type="journal article" date="2000" name="Proc. Natl. Acad. Sci. U.S.A.">
        <title>Involvement of neurogranin in the modulation of calcium/calmodulin-dependent protein kinase II, synaptic plasticity, and spatial learning: a study with knockout mice.</title>
        <authorList>
            <person name="Pak J.H."/>
            <person name="Huang F.L."/>
            <person name="Li J."/>
            <person name="Balschun D."/>
            <person name="Reymann K.G."/>
            <person name="Chiang C."/>
            <person name="Westphal H."/>
            <person name="Huang K.P."/>
        </authorList>
    </citation>
    <scope>NUCLEOTIDE SEQUENCE [GENOMIC DNA]</scope>
    <scope>FUNCTION</scope>
    <source>
        <strain>129/SvJ</strain>
    </source>
</reference>
<reference key="2">
    <citation type="journal article" date="2005" name="Science">
        <title>The transcriptional landscape of the mammalian genome.</title>
        <authorList>
            <person name="Carninci P."/>
            <person name="Kasukawa T."/>
            <person name="Katayama S."/>
            <person name="Gough J."/>
            <person name="Frith M.C."/>
            <person name="Maeda N."/>
            <person name="Oyama R."/>
            <person name="Ravasi T."/>
            <person name="Lenhard B."/>
            <person name="Wells C."/>
            <person name="Kodzius R."/>
            <person name="Shimokawa K."/>
            <person name="Bajic V.B."/>
            <person name="Brenner S.E."/>
            <person name="Batalov S."/>
            <person name="Forrest A.R."/>
            <person name="Zavolan M."/>
            <person name="Davis M.J."/>
            <person name="Wilming L.G."/>
            <person name="Aidinis V."/>
            <person name="Allen J.E."/>
            <person name="Ambesi-Impiombato A."/>
            <person name="Apweiler R."/>
            <person name="Aturaliya R.N."/>
            <person name="Bailey T.L."/>
            <person name="Bansal M."/>
            <person name="Baxter L."/>
            <person name="Beisel K.W."/>
            <person name="Bersano T."/>
            <person name="Bono H."/>
            <person name="Chalk A.M."/>
            <person name="Chiu K.P."/>
            <person name="Choudhary V."/>
            <person name="Christoffels A."/>
            <person name="Clutterbuck D.R."/>
            <person name="Crowe M.L."/>
            <person name="Dalla E."/>
            <person name="Dalrymple B.P."/>
            <person name="de Bono B."/>
            <person name="Della Gatta G."/>
            <person name="di Bernardo D."/>
            <person name="Down T."/>
            <person name="Engstrom P."/>
            <person name="Fagiolini M."/>
            <person name="Faulkner G."/>
            <person name="Fletcher C.F."/>
            <person name="Fukushima T."/>
            <person name="Furuno M."/>
            <person name="Futaki S."/>
            <person name="Gariboldi M."/>
            <person name="Georgii-Hemming P."/>
            <person name="Gingeras T.R."/>
            <person name="Gojobori T."/>
            <person name="Green R.E."/>
            <person name="Gustincich S."/>
            <person name="Harbers M."/>
            <person name="Hayashi Y."/>
            <person name="Hensch T.K."/>
            <person name="Hirokawa N."/>
            <person name="Hill D."/>
            <person name="Huminiecki L."/>
            <person name="Iacono M."/>
            <person name="Ikeo K."/>
            <person name="Iwama A."/>
            <person name="Ishikawa T."/>
            <person name="Jakt M."/>
            <person name="Kanapin A."/>
            <person name="Katoh M."/>
            <person name="Kawasawa Y."/>
            <person name="Kelso J."/>
            <person name="Kitamura H."/>
            <person name="Kitano H."/>
            <person name="Kollias G."/>
            <person name="Krishnan S.P."/>
            <person name="Kruger A."/>
            <person name="Kummerfeld S.K."/>
            <person name="Kurochkin I.V."/>
            <person name="Lareau L.F."/>
            <person name="Lazarevic D."/>
            <person name="Lipovich L."/>
            <person name="Liu J."/>
            <person name="Liuni S."/>
            <person name="McWilliam S."/>
            <person name="Madan Babu M."/>
            <person name="Madera M."/>
            <person name="Marchionni L."/>
            <person name="Matsuda H."/>
            <person name="Matsuzawa S."/>
            <person name="Miki H."/>
            <person name="Mignone F."/>
            <person name="Miyake S."/>
            <person name="Morris K."/>
            <person name="Mottagui-Tabar S."/>
            <person name="Mulder N."/>
            <person name="Nakano N."/>
            <person name="Nakauchi H."/>
            <person name="Ng P."/>
            <person name="Nilsson R."/>
            <person name="Nishiguchi S."/>
            <person name="Nishikawa S."/>
            <person name="Nori F."/>
            <person name="Ohara O."/>
            <person name="Okazaki Y."/>
            <person name="Orlando V."/>
            <person name="Pang K.C."/>
            <person name="Pavan W.J."/>
            <person name="Pavesi G."/>
            <person name="Pesole G."/>
            <person name="Petrovsky N."/>
            <person name="Piazza S."/>
            <person name="Reed J."/>
            <person name="Reid J.F."/>
            <person name="Ring B.Z."/>
            <person name="Ringwald M."/>
            <person name="Rost B."/>
            <person name="Ruan Y."/>
            <person name="Salzberg S.L."/>
            <person name="Sandelin A."/>
            <person name="Schneider C."/>
            <person name="Schoenbach C."/>
            <person name="Sekiguchi K."/>
            <person name="Semple C.A."/>
            <person name="Seno S."/>
            <person name="Sessa L."/>
            <person name="Sheng Y."/>
            <person name="Shibata Y."/>
            <person name="Shimada H."/>
            <person name="Shimada K."/>
            <person name="Silva D."/>
            <person name="Sinclair B."/>
            <person name="Sperling S."/>
            <person name="Stupka E."/>
            <person name="Sugiura K."/>
            <person name="Sultana R."/>
            <person name="Takenaka Y."/>
            <person name="Taki K."/>
            <person name="Tammoja K."/>
            <person name="Tan S.L."/>
            <person name="Tang S."/>
            <person name="Taylor M.S."/>
            <person name="Tegner J."/>
            <person name="Teichmann S.A."/>
            <person name="Ueda H.R."/>
            <person name="van Nimwegen E."/>
            <person name="Verardo R."/>
            <person name="Wei C.L."/>
            <person name="Yagi K."/>
            <person name="Yamanishi H."/>
            <person name="Zabarovsky E."/>
            <person name="Zhu S."/>
            <person name="Zimmer A."/>
            <person name="Hide W."/>
            <person name="Bult C."/>
            <person name="Grimmond S.M."/>
            <person name="Teasdale R.D."/>
            <person name="Liu E.T."/>
            <person name="Brusic V."/>
            <person name="Quackenbush J."/>
            <person name="Wahlestedt C."/>
            <person name="Mattick J.S."/>
            <person name="Hume D.A."/>
            <person name="Kai C."/>
            <person name="Sasaki D."/>
            <person name="Tomaru Y."/>
            <person name="Fukuda S."/>
            <person name="Kanamori-Katayama M."/>
            <person name="Suzuki M."/>
            <person name="Aoki J."/>
            <person name="Arakawa T."/>
            <person name="Iida J."/>
            <person name="Imamura K."/>
            <person name="Itoh M."/>
            <person name="Kato T."/>
            <person name="Kawaji H."/>
            <person name="Kawagashira N."/>
            <person name="Kawashima T."/>
            <person name="Kojima M."/>
            <person name="Kondo S."/>
            <person name="Konno H."/>
            <person name="Nakano K."/>
            <person name="Ninomiya N."/>
            <person name="Nishio T."/>
            <person name="Okada M."/>
            <person name="Plessy C."/>
            <person name="Shibata K."/>
            <person name="Shiraki T."/>
            <person name="Suzuki S."/>
            <person name="Tagami M."/>
            <person name="Waki K."/>
            <person name="Watahiki A."/>
            <person name="Okamura-Oho Y."/>
            <person name="Suzuki H."/>
            <person name="Kawai J."/>
            <person name="Hayashizaki Y."/>
        </authorList>
    </citation>
    <scope>NUCLEOTIDE SEQUENCE [LARGE SCALE MRNA]</scope>
    <source>
        <strain>C57BL/6J</strain>
        <tissue>Brain</tissue>
        <tissue>Visual cortex</tissue>
    </source>
</reference>
<reference key="3">
    <citation type="journal article" date="2004" name="Genome Res.">
        <title>The status, quality, and expansion of the NIH full-length cDNA project: the Mammalian Gene Collection (MGC).</title>
        <authorList>
            <consortium name="The MGC Project Team"/>
        </authorList>
    </citation>
    <scope>NUCLEOTIDE SEQUENCE [LARGE SCALE MRNA]</scope>
    <source>
        <tissue>Brain</tissue>
    </source>
</reference>
<reference key="4">
    <citation type="journal article" date="2010" name="Cell">
        <title>A tissue-specific atlas of mouse protein phosphorylation and expression.</title>
        <authorList>
            <person name="Huttlin E.L."/>
            <person name="Jedrychowski M.P."/>
            <person name="Elias J.E."/>
            <person name="Goswami T."/>
            <person name="Rad R."/>
            <person name="Beausoleil S.A."/>
            <person name="Villen J."/>
            <person name="Haas W."/>
            <person name="Sowa M.E."/>
            <person name="Gygi S.P."/>
        </authorList>
    </citation>
    <scope>IDENTIFICATION BY MASS SPECTROMETRY [LARGE SCALE ANALYSIS]</scope>
    <source>
        <tissue>Brain</tissue>
    </source>
</reference>
<reference key="5">
    <citation type="journal article" date="2014" name="Mol. Cell. Proteomics">
        <title>Immunoaffinity enrichment and mass spectrometry analysis of protein methylation.</title>
        <authorList>
            <person name="Guo A."/>
            <person name="Gu H."/>
            <person name="Zhou J."/>
            <person name="Mulhern D."/>
            <person name="Wang Y."/>
            <person name="Lee K.A."/>
            <person name="Yang V."/>
            <person name="Aguiar M."/>
            <person name="Kornhauser J."/>
            <person name="Jia X."/>
            <person name="Ren J."/>
            <person name="Beausoleil S.A."/>
            <person name="Silva J.C."/>
            <person name="Vemulapalli V."/>
            <person name="Bedford M.T."/>
            <person name="Comb M.J."/>
        </authorList>
    </citation>
    <scope>METHYLATION [LARGE SCALE ANALYSIS] AT ARG-68</scope>
    <scope>IDENTIFICATION BY MASS SPECTROMETRY [LARGE SCALE ANALYSIS]</scope>
    <source>
        <tissue>Brain</tissue>
        <tissue>Embryo</tissue>
    </source>
</reference>
<reference key="6">
    <citation type="journal article" date="2013" name="Sci. Rep.">
        <title>Structural basis for the interaction of unstructured neuron specific substrates neuromodulin and neurogranin with Calmodulin.</title>
        <authorList>
            <person name="Kumar V."/>
            <person name="Chichili V.P."/>
            <person name="Zhong L."/>
            <person name="Tang X."/>
            <person name="Velazquez-Campoy A."/>
            <person name="Sheu F.S."/>
            <person name="Seetharaman J."/>
            <person name="Gerges N.Z."/>
            <person name="Sivaraman J."/>
        </authorList>
    </citation>
    <scope>X-RAY CRYSTALLOGRAPHY (2.7 ANGSTROMS) OF 27-50 IN COMPLEX WITH CALMODULIN</scope>
    <scope>SUBUNIT</scope>
    <scope>IQ DOMAIN</scope>
    <scope>PHOSPHORYLATION AT SER-36</scope>
    <scope>MUTAGENESIS OF ARG-38</scope>
</reference>
<proteinExistence type="evidence at protein level"/>
<dbReference type="EMBL" id="AF230869">
    <property type="protein sequence ID" value="AAG27519.1"/>
    <property type="molecule type" value="Genomic_DNA"/>
</dbReference>
<dbReference type="EMBL" id="AK002933">
    <property type="protein sequence ID" value="BAB22466.1"/>
    <property type="molecule type" value="mRNA"/>
</dbReference>
<dbReference type="EMBL" id="AK158630">
    <property type="protein sequence ID" value="BAE34589.1"/>
    <property type="molecule type" value="mRNA"/>
</dbReference>
<dbReference type="EMBL" id="BC061102">
    <property type="protein sequence ID" value="AAH61102.1"/>
    <property type="molecule type" value="mRNA"/>
</dbReference>
<dbReference type="EMBL" id="BC138511">
    <property type="protein sequence ID" value="AAI38512.1"/>
    <property type="molecule type" value="mRNA"/>
</dbReference>
<dbReference type="EMBL" id="BC138513">
    <property type="protein sequence ID" value="AAI38514.1"/>
    <property type="molecule type" value="mRNA"/>
</dbReference>
<dbReference type="CCDS" id="CCDS40585.1"/>
<dbReference type="RefSeq" id="NP_071312.1">
    <property type="nucleotide sequence ID" value="NM_022029.2"/>
</dbReference>
<dbReference type="PDB" id="4E50">
    <property type="method" value="X-ray"/>
    <property type="resolution" value="2.70 A"/>
    <property type="chains" value="A=25-50"/>
</dbReference>
<dbReference type="PDBsum" id="4E50"/>
<dbReference type="BMRB" id="P60761"/>
<dbReference type="SMR" id="P60761"/>
<dbReference type="BioGRID" id="211017">
    <property type="interactions" value="5"/>
</dbReference>
<dbReference type="FunCoup" id="P60761">
    <property type="interactions" value="150"/>
</dbReference>
<dbReference type="IntAct" id="P60761">
    <property type="interactions" value="2"/>
</dbReference>
<dbReference type="STRING" id="10090.ENSMUSP00000070113"/>
<dbReference type="GlyGen" id="P60761">
    <property type="glycosylation" value="1 site, 1 O-linked glycan (1 site)"/>
</dbReference>
<dbReference type="iPTMnet" id="P60761"/>
<dbReference type="PhosphoSitePlus" id="P60761"/>
<dbReference type="PaxDb" id="10090-ENSMUSP00000070113"/>
<dbReference type="PeptideAtlas" id="P60761"/>
<dbReference type="ProteomicsDB" id="287483"/>
<dbReference type="Antibodypedia" id="45991">
    <property type="antibodies" value="196 antibodies from 35 providers"/>
</dbReference>
<dbReference type="DNASU" id="64011"/>
<dbReference type="Ensembl" id="ENSMUST00000065668.12">
    <property type="protein sequence ID" value="ENSMUSP00000070113.5"/>
    <property type="gene ID" value="ENSMUSG00000053310.12"/>
</dbReference>
<dbReference type="GeneID" id="64011"/>
<dbReference type="KEGG" id="mmu:64011"/>
<dbReference type="UCSC" id="uc009ovc.1">
    <property type="organism name" value="mouse"/>
</dbReference>
<dbReference type="AGR" id="MGI:1927184"/>
<dbReference type="CTD" id="4900"/>
<dbReference type="MGI" id="MGI:1927184">
    <property type="gene designation" value="Nrgn"/>
</dbReference>
<dbReference type="VEuPathDB" id="HostDB:ENSMUSG00000053310"/>
<dbReference type="eggNOG" id="ENOG502S6YP">
    <property type="taxonomic scope" value="Eukaryota"/>
</dbReference>
<dbReference type="GeneTree" id="ENSGT00440000039324"/>
<dbReference type="HOGENOM" id="CLU_129609_1_0_1"/>
<dbReference type="InParanoid" id="P60761"/>
<dbReference type="OMA" id="RPQESAC"/>
<dbReference type="PhylomeDB" id="P60761"/>
<dbReference type="TreeFam" id="TF342962"/>
<dbReference type="BioGRID-ORCS" id="64011">
    <property type="hits" value="2 hits in 79 CRISPR screens"/>
</dbReference>
<dbReference type="CD-CODE" id="CE726F99">
    <property type="entry name" value="Postsynaptic density"/>
</dbReference>
<dbReference type="ChiTaRS" id="Nrgn">
    <property type="organism name" value="mouse"/>
</dbReference>
<dbReference type="EvolutionaryTrace" id="P60761"/>
<dbReference type="PRO" id="PR:P60761"/>
<dbReference type="Proteomes" id="UP000000589">
    <property type="component" value="Chromosome 9"/>
</dbReference>
<dbReference type="RNAct" id="P60761">
    <property type="molecule type" value="protein"/>
</dbReference>
<dbReference type="Bgee" id="ENSMUSG00000053310">
    <property type="expression patterns" value="Expressed in superior frontal gyrus and 100 other cell types or tissues"/>
</dbReference>
<dbReference type="GO" id="GO:0030424">
    <property type="term" value="C:axon"/>
    <property type="evidence" value="ECO:0007669"/>
    <property type="project" value="Ensembl"/>
</dbReference>
<dbReference type="GO" id="GO:0044327">
    <property type="term" value="C:dendritic spine head"/>
    <property type="evidence" value="ECO:0007669"/>
    <property type="project" value="Ensembl"/>
</dbReference>
<dbReference type="GO" id="GO:0098978">
    <property type="term" value="C:glutamatergic synapse"/>
    <property type="evidence" value="ECO:0007669"/>
    <property type="project" value="Ensembl"/>
</dbReference>
<dbReference type="GO" id="GO:0031966">
    <property type="term" value="C:mitochondrial membrane"/>
    <property type="evidence" value="ECO:0007669"/>
    <property type="project" value="Ensembl"/>
</dbReference>
<dbReference type="GO" id="GO:0043025">
    <property type="term" value="C:neuronal cell body"/>
    <property type="evidence" value="ECO:0007669"/>
    <property type="project" value="Ensembl"/>
</dbReference>
<dbReference type="GO" id="GO:0045211">
    <property type="term" value="C:postsynaptic membrane"/>
    <property type="evidence" value="ECO:0007669"/>
    <property type="project" value="Ensembl"/>
</dbReference>
<dbReference type="GO" id="GO:0012510">
    <property type="term" value="C:trans-Golgi network transport vesicle membrane"/>
    <property type="evidence" value="ECO:0007669"/>
    <property type="project" value="Ensembl"/>
</dbReference>
<dbReference type="GO" id="GO:0005516">
    <property type="term" value="F:calmodulin binding"/>
    <property type="evidence" value="ECO:0000314"/>
    <property type="project" value="MGI"/>
</dbReference>
<dbReference type="GO" id="GO:0070300">
    <property type="term" value="F:phosphatidic acid binding"/>
    <property type="evidence" value="ECO:0007669"/>
    <property type="project" value="Ensembl"/>
</dbReference>
<dbReference type="GO" id="GO:0005547">
    <property type="term" value="F:phosphatidylinositol-3,4,5-trisphosphate binding"/>
    <property type="evidence" value="ECO:0007669"/>
    <property type="project" value="Ensembl"/>
</dbReference>
<dbReference type="GO" id="GO:0008306">
    <property type="term" value="P:associative learning"/>
    <property type="evidence" value="ECO:0007669"/>
    <property type="project" value="Ensembl"/>
</dbReference>
<dbReference type="GO" id="GO:0035556">
    <property type="term" value="P:intracellular signal transduction"/>
    <property type="evidence" value="ECO:0000304"/>
    <property type="project" value="MGI"/>
</dbReference>
<dbReference type="GO" id="GO:1900273">
    <property type="term" value="P:positive regulation of long-term synaptic potentiation"/>
    <property type="evidence" value="ECO:0007669"/>
    <property type="project" value="Ensembl"/>
</dbReference>
<dbReference type="GO" id="GO:0099170">
    <property type="term" value="P:postsynaptic modulation of chemical synaptic transmission"/>
    <property type="evidence" value="ECO:0007669"/>
    <property type="project" value="Ensembl"/>
</dbReference>
<dbReference type="GO" id="GO:0021537">
    <property type="term" value="P:telencephalon development"/>
    <property type="evidence" value="ECO:0007669"/>
    <property type="project" value="Ensembl"/>
</dbReference>
<dbReference type="DisProt" id="DP02296"/>
<dbReference type="Gene3D" id="1.20.5.190">
    <property type="match status" value="1"/>
</dbReference>
<dbReference type="InterPro" id="IPR000048">
    <property type="entry name" value="IQ_motif_EF-hand-BS"/>
</dbReference>
<dbReference type="PANTHER" id="PTHR10699">
    <property type="entry name" value="NEUROMODULIN"/>
    <property type="match status" value="1"/>
</dbReference>
<dbReference type="PANTHER" id="PTHR10699:SF16">
    <property type="entry name" value="SPERM SURFACE PROTEIN SP17"/>
    <property type="match status" value="1"/>
</dbReference>
<dbReference type="Pfam" id="PF00612">
    <property type="entry name" value="IQ"/>
    <property type="match status" value="1"/>
</dbReference>
<dbReference type="SMART" id="SM00015">
    <property type="entry name" value="IQ"/>
    <property type="match status" value="1"/>
</dbReference>
<dbReference type="PROSITE" id="PS50096">
    <property type="entry name" value="IQ"/>
    <property type="match status" value="1"/>
</dbReference>